<accession>Q893Q9</accession>
<reference key="1">
    <citation type="journal article" date="2003" name="Proc. Natl. Acad. Sci. U.S.A.">
        <title>The genome sequence of Clostridium tetani, the causative agent of tetanus disease.</title>
        <authorList>
            <person name="Brueggemann H."/>
            <person name="Baeumer S."/>
            <person name="Fricke W.F."/>
            <person name="Wiezer A."/>
            <person name="Liesegang H."/>
            <person name="Decker I."/>
            <person name="Herzberg C."/>
            <person name="Martinez-Arias R."/>
            <person name="Merkl R."/>
            <person name="Henne A."/>
            <person name="Gottschalk G."/>
        </authorList>
    </citation>
    <scope>NUCLEOTIDE SEQUENCE [LARGE SCALE GENOMIC DNA]</scope>
    <source>
        <strain>Massachusetts / E88</strain>
    </source>
</reference>
<comment type="function">
    <text evidence="1">Catalyzes the phosphorylation of the hydroxyl group of 4-methyl-5-beta-hydroxyethylthiazole (THZ).</text>
</comment>
<comment type="catalytic activity">
    <reaction evidence="1">
        <text>5-(2-hydroxyethyl)-4-methylthiazole + ATP = 4-methyl-5-(2-phosphooxyethyl)-thiazole + ADP + H(+)</text>
        <dbReference type="Rhea" id="RHEA:24212"/>
        <dbReference type="ChEBI" id="CHEBI:15378"/>
        <dbReference type="ChEBI" id="CHEBI:17957"/>
        <dbReference type="ChEBI" id="CHEBI:30616"/>
        <dbReference type="ChEBI" id="CHEBI:58296"/>
        <dbReference type="ChEBI" id="CHEBI:456216"/>
        <dbReference type="EC" id="2.7.1.50"/>
    </reaction>
</comment>
<comment type="cofactor">
    <cofactor evidence="1">
        <name>Mg(2+)</name>
        <dbReference type="ChEBI" id="CHEBI:18420"/>
    </cofactor>
</comment>
<comment type="pathway">
    <text evidence="1">Cofactor biosynthesis; thiamine diphosphate biosynthesis; 4-methyl-5-(2-phosphoethyl)-thiazole from 5-(2-hydroxyethyl)-4-methylthiazole: step 1/1.</text>
</comment>
<comment type="similarity">
    <text evidence="1">Belongs to the Thz kinase family.</text>
</comment>
<evidence type="ECO:0000255" key="1">
    <source>
        <dbReference type="HAMAP-Rule" id="MF_00228"/>
    </source>
</evidence>
<proteinExistence type="inferred from homology"/>
<name>THIM_CLOTE</name>
<sequence length="274" mass="29748">MEIYKKIYNSLLKLKEKNPLIHHITNYVTVNDCANIVLAIGASPVMADDIREVEDMVSIASALVINIGTLNKKTVKSMFLAGKKANELNIPVILDPVGVGATKYRTSIALELLEEIKFSVVRGNISEVKVLSGMNASTKGVDAESWDETNPIEERIRLVKSLSEKYNAVIGITGEKDVIGFKEEVYTVENGSSIMAKITGAGCMCTSVIASYCGAEENYLQATLSGVVSMGIAGEIAYEKTKNLGPSSFRTALIDSIYNLEESSFNERGKVYNA</sequence>
<organism>
    <name type="scientific">Clostridium tetani (strain Massachusetts / E88)</name>
    <dbReference type="NCBI Taxonomy" id="212717"/>
    <lineage>
        <taxon>Bacteria</taxon>
        <taxon>Bacillati</taxon>
        <taxon>Bacillota</taxon>
        <taxon>Clostridia</taxon>
        <taxon>Eubacteriales</taxon>
        <taxon>Clostridiaceae</taxon>
        <taxon>Clostridium</taxon>
    </lineage>
</organism>
<feature type="chain" id="PRO_0000156930" description="Hydroxyethylthiazole kinase">
    <location>
        <begin position="1"/>
        <end position="274"/>
    </location>
</feature>
<feature type="binding site" evidence="1">
    <location>
        <position position="46"/>
    </location>
    <ligand>
        <name>substrate</name>
    </ligand>
</feature>
<feature type="binding site" evidence="1">
    <location>
        <position position="122"/>
    </location>
    <ligand>
        <name>ATP</name>
        <dbReference type="ChEBI" id="CHEBI:30616"/>
    </ligand>
</feature>
<feature type="binding site" evidence="1">
    <location>
        <position position="173"/>
    </location>
    <ligand>
        <name>ATP</name>
        <dbReference type="ChEBI" id="CHEBI:30616"/>
    </ligand>
</feature>
<feature type="binding site" evidence="1">
    <location>
        <position position="200"/>
    </location>
    <ligand>
        <name>substrate</name>
    </ligand>
</feature>
<keyword id="KW-0067">ATP-binding</keyword>
<keyword id="KW-0418">Kinase</keyword>
<keyword id="KW-0460">Magnesium</keyword>
<keyword id="KW-0479">Metal-binding</keyword>
<keyword id="KW-0547">Nucleotide-binding</keyword>
<keyword id="KW-1185">Reference proteome</keyword>
<keyword id="KW-0784">Thiamine biosynthesis</keyword>
<keyword id="KW-0808">Transferase</keyword>
<dbReference type="EC" id="2.7.1.50" evidence="1"/>
<dbReference type="EMBL" id="AE015927">
    <property type="protein sequence ID" value="AAO36283.1"/>
    <property type="molecule type" value="Genomic_DNA"/>
</dbReference>
<dbReference type="RefSeq" id="WP_011099943.1">
    <property type="nucleotide sequence ID" value="NC_004557.1"/>
</dbReference>
<dbReference type="SMR" id="Q893Q9"/>
<dbReference type="STRING" id="212717.CTC_01752"/>
<dbReference type="GeneID" id="24253408"/>
<dbReference type="KEGG" id="ctc:CTC_01752"/>
<dbReference type="HOGENOM" id="CLU_019943_0_0_9"/>
<dbReference type="OrthoDB" id="9778146at2"/>
<dbReference type="UniPathway" id="UPA00060">
    <property type="reaction ID" value="UER00139"/>
</dbReference>
<dbReference type="Proteomes" id="UP000001412">
    <property type="component" value="Chromosome"/>
</dbReference>
<dbReference type="GO" id="GO:0005524">
    <property type="term" value="F:ATP binding"/>
    <property type="evidence" value="ECO:0007669"/>
    <property type="project" value="UniProtKB-UniRule"/>
</dbReference>
<dbReference type="GO" id="GO:0004417">
    <property type="term" value="F:hydroxyethylthiazole kinase activity"/>
    <property type="evidence" value="ECO:0007669"/>
    <property type="project" value="UniProtKB-UniRule"/>
</dbReference>
<dbReference type="GO" id="GO:0000287">
    <property type="term" value="F:magnesium ion binding"/>
    <property type="evidence" value="ECO:0007669"/>
    <property type="project" value="UniProtKB-UniRule"/>
</dbReference>
<dbReference type="GO" id="GO:0009228">
    <property type="term" value="P:thiamine biosynthetic process"/>
    <property type="evidence" value="ECO:0007669"/>
    <property type="project" value="UniProtKB-KW"/>
</dbReference>
<dbReference type="GO" id="GO:0009229">
    <property type="term" value="P:thiamine diphosphate biosynthetic process"/>
    <property type="evidence" value="ECO:0007669"/>
    <property type="project" value="UniProtKB-UniRule"/>
</dbReference>
<dbReference type="CDD" id="cd01170">
    <property type="entry name" value="THZ_kinase"/>
    <property type="match status" value="1"/>
</dbReference>
<dbReference type="Gene3D" id="3.40.1190.20">
    <property type="match status" value="1"/>
</dbReference>
<dbReference type="HAMAP" id="MF_00228">
    <property type="entry name" value="Thz_kinase"/>
    <property type="match status" value="1"/>
</dbReference>
<dbReference type="InterPro" id="IPR000417">
    <property type="entry name" value="Hyethyz_kinase"/>
</dbReference>
<dbReference type="InterPro" id="IPR029056">
    <property type="entry name" value="Ribokinase-like"/>
</dbReference>
<dbReference type="NCBIfam" id="NF006830">
    <property type="entry name" value="PRK09355.1"/>
    <property type="match status" value="1"/>
</dbReference>
<dbReference type="NCBIfam" id="TIGR00694">
    <property type="entry name" value="thiM"/>
    <property type="match status" value="1"/>
</dbReference>
<dbReference type="Pfam" id="PF02110">
    <property type="entry name" value="HK"/>
    <property type="match status" value="1"/>
</dbReference>
<dbReference type="PIRSF" id="PIRSF000513">
    <property type="entry name" value="Thz_kinase"/>
    <property type="match status" value="1"/>
</dbReference>
<dbReference type="PRINTS" id="PR01099">
    <property type="entry name" value="HYETHTZKNASE"/>
</dbReference>
<dbReference type="SUPFAM" id="SSF53613">
    <property type="entry name" value="Ribokinase-like"/>
    <property type="match status" value="1"/>
</dbReference>
<protein>
    <recommendedName>
        <fullName evidence="1">Hydroxyethylthiazole kinase</fullName>
        <ecNumber evidence="1">2.7.1.50</ecNumber>
    </recommendedName>
    <alternativeName>
        <fullName evidence="1">4-methyl-5-beta-hydroxyethylthiazole kinase</fullName>
        <shortName evidence="1">TH kinase</shortName>
        <shortName evidence="1">Thz kinase</shortName>
    </alternativeName>
</protein>
<gene>
    <name evidence="1" type="primary">thiM</name>
    <name type="ordered locus">CTC_01752</name>
</gene>